<name>PNSL5_ARATH</name>
<organism>
    <name type="scientific">Arabidopsis thaliana</name>
    <name type="common">Mouse-ear cress</name>
    <dbReference type="NCBI Taxonomy" id="3702"/>
    <lineage>
        <taxon>Eukaryota</taxon>
        <taxon>Viridiplantae</taxon>
        <taxon>Streptophyta</taxon>
        <taxon>Embryophyta</taxon>
        <taxon>Tracheophyta</taxon>
        <taxon>Spermatophyta</taxon>
        <taxon>Magnoliopsida</taxon>
        <taxon>eudicotyledons</taxon>
        <taxon>Gunneridae</taxon>
        <taxon>Pentapetalae</taxon>
        <taxon>rosids</taxon>
        <taxon>malvids</taxon>
        <taxon>Brassicales</taxon>
        <taxon>Brassicaceae</taxon>
        <taxon>Camelineae</taxon>
        <taxon>Arabidopsis</taxon>
    </lineage>
</organism>
<feature type="transit peptide" description="Chloroplast" evidence="3">
    <location>
        <begin position="1"/>
        <end status="unknown"/>
    </location>
</feature>
<feature type="transit peptide" description="Thylakoid" evidence="6">
    <location>
        <begin status="unknown"/>
        <end position="76"/>
    </location>
</feature>
<feature type="chain" id="PRO_0000025503" description="Photosynthetic NDH subunit of lumenal location 5, chloroplastic">
    <location>
        <begin position="77"/>
        <end position="259"/>
    </location>
</feature>
<feature type="domain" description="PPIase cyclophilin-type" evidence="4">
    <location>
        <begin position="96"/>
        <end position="253"/>
    </location>
</feature>
<feature type="region of interest" description="Disordered" evidence="5">
    <location>
        <begin position="1"/>
        <end position="21"/>
    </location>
</feature>
<feature type="compositionally biased region" description="Polar residues" evidence="5">
    <location>
        <begin position="1"/>
        <end position="13"/>
    </location>
</feature>
<feature type="disulfide bond" evidence="1">
    <location>
        <begin position="204"/>
        <end position="251"/>
    </location>
</feature>
<feature type="splice variant" id="VSP_055387" description="In isoform 2." evidence="22">
    <location>
        <begin position="9"/>
        <end position="12"/>
    </location>
</feature>
<feature type="sequence conflict" description="In Ref. 5; AAM65904." evidence="22" ref="5">
    <original>F</original>
    <variation>L</variation>
    <location>
        <position position="29"/>
    </location>
</feature>
<gene>
    <name evidence="20" type="primary">PNSL5</name>
    <name evidence="15 16 17 21" type="synonym">CYP20-2</name>
    <name evidence="23" type="ordered locus">At5g13120</name>
    <name evidence="24" type="ORF">T19L5_80</name>
</gene>
<protein>
    <recommendedName>
        <fullName evidence="20">Photosynthetic NDH subunit of lumenal location 5, chloroplastic</fullName>
    </recommendedName>
    <alternativeName>
        <fullName evidence="15 16 17">Cyclophilin of 20 kDa 2</fullName>
        <shortName evidence="15 16 17">AtCYP20-2</shortName>
    </alternativeName>
    <alternativeName>
        <fullName evidence="18">Peptidyl-prolyl cis-trans isomerase CYP20-2</fullName>
        <shortName evidence="18 21">PPIase CYP20-2</shortName>
        <ecNumber evidence="11 14">5.2.1.8</ecNumber>
    </alternativeName>
    <alternativeName>
        <fullName evidence="21">Rotamase CYP20-2</fullName>
    </alternativeName>
    <alternativeName>
        <fullName evidence="19">Thylakoid lumen PPIase of 20 kDa</fullName>
        <shortName evidence="19">TLP20</shortName>
        <shortName evidence="19">TLP21</shortName>
    </alternativeName>
</protein>
<comment type="function">
    <text evidence="11 14 22">NDH shuttles electrons from NAD(P)H:plastoquinone, via FMN and iron-sulfur (Fe-S) centers, to quinones in the photosynthetic chain and possibly in a chloroplast respiratory chain. The immediate electron acceptor for the enzyme in this species is believed to be plastoquinone. Couples the redox reaction to proton translocation, and thus conserves the redox energy in a proton gradient (Probable). PPIases accelerate the folding of proteins. It catalyzes the cis-trans isomerization of proline imidic peptide bonds in oligopeptides. Responsible, with FKBP13, for all PPIase activity observed in thylakoid lumen. Modulates the conformation of BZR1, which regulates flowering (PubMed:16765949, PubMed:23897924).</text>
</comment>
<comment type="catalytic activity">
    <reaction evidence="11 14">
        <text>[protein]-peptidylproline (omega=180) = [protein]-peptidylproline (omega=0)</text>
        <dbReference type="Rhea" id="RHEA:16237"/>
        <dbReference type="Rhea" id="RHEA-COMP:10747"/>
        <dbReference type="Rhea" id="RHEA-COMP:10748"/>
        <dbReference type="ChEBI" id="CHEBI:83833"/>
        <dbReference type="ChEBI" id="CHEBI:83834"/>
        <dbReference type="EC" id="5.2.1.8"/>
    </reaction>
</comment>
<comment type="activity regulation">
    <text evidence="2">Binds cyclosporin A (CsA). CsA mediates some of its effects via an inhibitory action on PPIase.</text>
</comment>
<comment type="subunit">
    <text evidence="12 13 14">Part of the chloroplast NDH complex, composed of a mixture of chloroplast and nucleus encoded subunits. Component of the NDH lumenal subcomplex, at least composed of PnsL1, PnsL2, PnsL3, PnsL4 and PnsL5 (PubMed:21785130). Interacts with AHK2 and BZR1 (PubMed:18642946, PubMed:23897924).</text>
</comment>
<comment type="interaction">
    <interactant intactId="EBI-1807485">
        <id>Q9ASS6</id>
    </interactant>
    <interactant intactId="EBI-1100634">
        <id>Q9C5U2</id>
        <label>AHK2</label>
    </interactant>
    <organismsDiffer>false</organismsDiffer>
    <experiments>2</experiments>
</comment>
<comment type="subcellular location">
    <subcellularLocation>
        <location evidence="7 10">Plastid</location>
        <location evidence="7 10">Chloroplast thylakoid membrane</location>
        <topology evidence="6 10">Peripheral membrane protein</topology>
        <orientation evidence="6 10">Lumenal side</orientation>
    </subcellularLocation>
    <text evidence="10">Peripherally associated with PSII complexes (PubMed:15084723).</text>
</comment>
<comment type="alternative products">
    <event type="alternative splicing"/>
    <isoform>
        <id>Q9ASS6-1</id>
        <name>1</name>
        <sequence type="displayed"/>
    </isoform>
    <isoform>
        <id>Q9ASS6-2</id>
        <name>2</name>
        <sequence type="described" ref="VSP_055387"/>
    </isoform>
    <text>A number of isoforms are produced. According to EST sequences.</text>
</comment>
<comment type="tissue specificity">
    <text evidence="9">Ubiquitous.</text>
</comment>
<comment type="induction">
    <text evidence="8">Down-regulated by pathogen. Up-regulated by light.</text>
</comment>
<comment type="similarity">
    <text evidence="22">Belongs to the cyclophilin-type PPIase family.</text>
</comment>
<comment type="sequence caution" evidence="22">
    <conflict type="erroneous gene model prediction">
        <sequence resource="EMBL-CDS" id="CAC05440"/>
    </conflict>
</comment>
<keyword id="KW-0002">3D-structure</keyword>
<keyword id="KW-0025">Alternative splicing</keyword>
<keyword id="KW-0143">Chaperone</keyword>
<keyword id="KW-0150">Chloroplast</keyword>
<keyword id="KW-0903">Direct protein sequencing</keyword>
<keyword id="KW-1015">Disulfide bond</keyword>
<keyword id="KW-0413">Isomerase</keyword>
<keyword id="KW-0472">Membrane</keyword>
<keyword id="KW-0934">Plastid</keyword>
<keyword id="KW-1185">Reference proteome</keyword>
<keyword id="KW-0697">Rotamase</keyword>
<keyword id="KW-0793">Thylakoid</keyword>
<keyword id="KW-0809">Transit peptide</keyword>
<keyword id="KW-0813">Transport</keyword>
<dbReference type="EC" id="5.2.1.8" evidence="11 14"/>
<dbReference type="EMBL" id="AY568517">
    <property type="protein sequence ID" value="AAS75300.1"/>
    <property type="molecule type" value="mRNA"/>
</dbReference>
<dbReference type="EMBL" id="AL391711">
    <property type="protein sequence ID" value="CAC05440.1"/>
    <property type="status" value="ALT_SEQ"/>
    <property type="molecule type" value="Genomic_DNA"/>
</dbReference>
<dbReference type="EMBL" id="CP002688">
    <property type="protein sequence ID" value="AED91852.1"/>
    <property type="molecule type" value="Genomic_DNA"/>
</dbReference>
<dbReference type="EMBL" id="CP002688">
    <property type="protein sequence ID" value="AED91853.1"/>
    <property type="molecule type" value="Genomic_DNA"/>
</dbReference>
<dbReference type="EMBL" id="AF367307">
    <property type="protein sequence ID" value="AAK32894.1"/>
    <property type="molecule type" value="mRNA"/>
</dbReference>
<dbReference type="EMBL" id="AY059152">
    <property type="protein sequence ID" value="AAL15377.1"/>
    <property type="molecule type" value="mRNA"/>
</dbReference>
<dbReference type="EMBL" id="AY088365">
    <property type="protein sequence ID" value="AAM65904.1"/>
    <property type="molecule type" value="mRNA"/>
</dbReference>
<dbReference type="RefSeq" id="NP_001190299.1">
    <molecule id="Q9ASS6-2"/>
    <property type="nucleotide sequence ID" value="NM_001203370.1"/>
</dbReference>
<dbReference type="RefSeq" id="NP_196816.1">
    <molecule id="Q9ASS6-1"/>
    <property type="nucleotide sequence ID" value="NM_121315.3"/>
</dbReference>
<dbReference type="PDB" id="7WFF">
    <property type="method" value="EM"/>
    <property type="resolution" value="3.59 A"/>
    <property type="chains" value="j=1-259"/>
</dbReference>
<dbReference type="PDB" id="7WG5">
    <property type="method" value="EM"/>
    <property type="resolution" value="3.89 A"/>
    <property type="chains" value="j=1-259"/>
</dbReference>
<dbReference type="PDBsum" id="7WFF"/>
<dbReference type="PDBsum" id="7WG5"/>
<dbReference type="EMDB" id="EMD-32464"/>
<dbReference type="EMDB" id="EMD-32477"/>
<dbReference type="SMR" id="Q9ASS6"/>
<dbReference type="BioGRID" id="16429">
    <property type="interactions" value="4"/>
</dbReference>
<dbReference type="FunCoup" id="Q9ASS6">
    <property type="interactions" value="2374"/>
</dbReference>
<dbReference type="IntAct" id="Q9ASS6">
    <property type="interactions" value="2"/>
</dbReference>
<dbReference type="STRING" id="3702.Q9ASS6"/>
<dbReference type="TCDB" id="3.D.1.8.1">
    <property type="family name" value="the h+ or na+-translocating nadh dehydrogenase (ndh) family"/>
</dbReference>
<dbReference type="iPTMnet" id="Q9ASS6"/>
<dbReference type="PaxDb" id="3702-AT5G13120.1"/>
<dbReference type="ProteomicsDB" id="234791">
    <molecule id="Q9ASS6-1"/>
</dbReference>
<dbReference type="EnsemblPlants" id="AT5G13120.1">
    <molecule id="Q9ASS6-1"/>
    <property type="protein sequence ID" value="AT5G13120.1"/>
    <property type="gene ID" value="AT5G13120"/>
</dbReference>
<dbReference type="EnsemblPlants" id="AT5G13120.2">
    <molecule id="Q9ASS6-2"/>
    <property type="protein sequence ID" value="AT5G13120.2"/>
    <property type="gene ID" value="AT5G13120"/>
</dbReference>
<dbReference type="GeneID" id="831151"/>
<dbReference type="Gramene" id="AT5G13120.1">
    <molecule id="Q9ASS6-1"/>
    <property type="protein sequence ID" value="AT5G13120.1"/>
    <property type="gene ID" value="AT5G13120"/>
</dbReference>
<dbReference type="Gramene" id="AT5G13120.2">
    <molecule id="Q9ASS6-2"/>
    <property type="protein sequence ID" value="AT5G13120.2"/>
    <property type="gene ID" value="AT5G13120"/>
</dbReference>
<dbReference type="KEGG" id="ath:AT5G13120"/>
<dbReference type="Araport" id="AT5G13120"/>
<dbReference type="TAIR" id="AT5G13120">
    <property type="gene designation" value="PNSL5"/>
</dbReference>
<dbReference type="eggNOG" id="KOG0880">
    <property type="taxonomic scope" value="Eukaryota"/>
</dbReference>
<dbReference type="InParanoid" id="Q9ASS6"/>
<dbReference type="OMA" id="HPGDRPK"/>
<dbReference type="OrthoDB" id="193499at2759"/>
<dbReference type="PhylomeDB" id="Q9ASS6"/>
<dbReference type="PRO" id="PR:Q9ASS6"/>
<dbReference type="Proteomes" id="UP000006548">
    <property type="component" value="Chromosome 5"/>
</dbReference>
<dbReference type="ExpressionAtlas" id="Q9ASS6">
    <property type="expression patterns" value="baseline and differential"/>
</dbReference>
<dbReference type="GO" id="GO:0009507">
    <property type="term" value="C:chloroplast"/>
    <property type="evidence" value="ECO:0007005"/>
    <property type="project" value="TAIR"/>
</dbReference>
<dbReference type="GO" id="GO:0009533">
    <property type="term" value="C:chloroplast stromal thylakoid"/>
    <property type="evidence" value="ECO:0000314"/>
    <property type="project" value="TAIR"/>
</dbReference>
<dbReference type="GO" id="GO:0009534">
    <property type="term" value="C:chloroplast thylakoid"/>
    <property type="evidence" value="ECO:0007005"/>
    <property type="project" value="TAIR"/>
</dbReference>
<dbReference type="GO" id="GO:0009535">
    <property type="term" value="C:chloroplast thylakoid membrane"/>
    <property type="evidence" value="ECO:0007005"/>
    <property type="project" value="TAIR"/>
</dbReference>
<dbReference type="GO" id="GO:0009536">
    <property type="term" value="C:plastid"/>
    <property type="evidence" value="ECO:0007005"/>
    <property type="project" value="TAIR"/>
</dbReference>
<dbReference type="GO" id="GO:0009579">
    <property type="term" value="C:thylakoid"/>
    <property type="evidence" value="ECO:0007005"/>
    <property type="project" value="TAIR"/>
</dbReference>
<dbReference type="GO" id="GO:0031977">
    <property type="term" value="C:thylakoid lumen"/>
    <property type="evidence" value="ECO:0007005"/>
    <property type="project" value="TAIR"/>
</dbReference>
<dbReference type="GO" id="GO:0003755">
    <property type="term" value="F:peptidyl-prolyl cis-trans isomerase activity"/>
    <property type="evidence" value="ECO:0000315"/>
    <property type="project" value="TAIR"/>
</dbReference>
<dbReference type="GO" id="GO:0043424">
    <property type="term" value="F:protein histidine kinase binding"/>
    <property type="evidence" value="ECO:0000353"/>
    <property type="project" value="UniProtKB"/>
</dbReference>
<dbReference type="GO" id="GO:0010275">
    <property type="term" value="P:NAD(P)H dehydrogenase complex assembly"/>
    <property type="evidence" value="ECO:0000315"/>
    <property type="project" value="TAIR"/>
</dbReference>
<dbReference type="GO" id="GO:0006457">
    <property type="term" value="P:protein folding"/>
    <property type="evidence" value="ECO:0007669"/>
    <property type="project" value="InterPro"/>
</dbReference>
<dbReference type="CDD" id="cd01926">
    <property type="entry name" value="cyclophilin_ABH_like"/>
    <property type="match status" value="1"/>
</dbReference>
<dbReference type="FunFam" id="2.40.100.10:FF:000001">
    <property type="entry name" value="Peptidyl-prolyl cis-trans isomerase"/>
    <property type="match status" value="1"/>
</dbReference>
<dbReference type="Gene3D" id="2.40.100.10">
    <property type="entry name" value="Cyclophilin-like"/>
    <property type="match status" value="1"/>
</dbReference>
<dbReference type="InterPro" id="IPR029000">
    <property type="entry name" value="Cyclophilin-like_dom_sf"/>
</dbReference>
<dbReference type="InterPro" id="IPR020892">
    <property type="entry name" value="Cyclophilin-type_PPIase_CS"/>
</dbReference>
<dbReference type="InterPro" id="IPR002130">
    <property type="entry name" value="Cyclophilin-type_PPIase_dom"/>
</dbReference>
<dbReference type="PANTHER" id="PTHR11071">
    <property type="entry name" value="PEPTIDYL-PROLYL CIS-TRANS ISOMERASE"/>
    <property type="match status" value="1"/>
</dbReference>
<dbReference type="PANTHER" id="PTHR11071:SF561">
    <property type="entry name" value="PEPTIDYL-PROLYL CIS-TRANS ISOMERASE D-RELATED"/>
    <property type="match status" value="1"/>
</dbReference>
<dbReference type="Pfam" id="PF00160">
    <property type="entry name" value="Pro_isomerase"/>
    <property type="match status" value="1"/>
</dbReference>
<dbReference type="PRINTS" id="PR00153">
    <property type="entry name" value="CSAPPISMRASE"/>
</dbReference>
<dbReference type="SUPFAM" id="SSF50891">
    <property type="entry name" value="Cyclophilin-like"/>
    <property type="match status" value="1"/>
</dbReference>
<dbReference type="PROSITE" id="PS00170">
    <property type="entry name" value="CSA_PPIASE_1"/>
    <property type="match status" value="1"/>
</dbReference>
<dbReference type="PROSITE" id="PS50072">
    <property type="entry name" value="CSA_PPIASE_2"/>
    <property type="match status" value="1"/>
</dbReference>
<evidence type="ECO:0000250" key="1">
    <source>
        <dbReference type="UniProtKB" id="P34791"/>
    </source>
</evidence>
<evidence type="ECO:0000250" key="2">
    <source>
        <dbReference type="UniProtKB" id="P62937"/>
    </source>
</evidence>
<evidence type="ECO:0000255" key="3"/>
<evidence type="ECO:0000255" key="4">
    <source>
        <dbReference type="PROSITE-ProRule" id="PRU00156"/>
    </source>
</evidence>
<evidence type="ECO:0000256" key="5">
    <source>
        <dbReference type="SAM" id="MobiDB-lite"/>
    </source>
</evidence>
<evidence type="ECO:0000269" key="6">
    <source>
    </source>
</evidence>
<evidence type="ECO:0000269" key="7">
    <source>
    </source>
</evidence>
<evidence type="ECO:0000269" key="8">
    <source>
    </source>
</evidence>
<evidence type="ECO:0000269" key="9">
    <source>
    </source>
</evidence>
<evidence type="ECO:0000269" key="10">
    <source>
    </source>
</evidence>
<evidence type="ECO:0000269" key="11">
    <source>
    </source>
</evidence>
<evidence type="ECO:0000269" key="12">
    <source>
    </source>
</evidence>
<evidence type="ECO:0000269" key="13">
    <source>
    </source>
</evidence>
<evidence type="ECO:0000269" key="14">
    <source>
    </source>
</evidence>
<evidence type="ECO:0000303" key="15">
    <source>
    </source>
</evidence>
<evidence type="ECO:0000303" key="16">
    <source>
    </source>
</evidence>
<evidence type="ECO:0000303" key="17">
    <source>
    </source>
</evidence>
<evidence type="ECO:0000303" key="18">
    <source>
    </source>
</evidence>
<evidence type="ECO:0000303" key="19">
    <source>
    </source>
</evidence>
<evidence type="ECO:0000303" key="20">
    <source>
    </source>
</evidence>
<evidence type="ECO:0000303" key="21">
    <source>
    </source>
</evidence>
<evidence type="ECO:0000305" key="22"/>
<evidence type="ECO:0000312" key="23">
    <source>
        <dbReference type="Araport" id="AT5G13120"/>
    </source>
</evidence>
<evidence type="ECO:0000312" key="24">
    <source>
        <dbReference type="EMBL" id="CAC05440.1"/>
    </source>
</evidence>
<accession>Q9ASS6</accession>
<accession>F4K2G0</accession>
<accession>Q53YK9</accession>
<accession>Q8L9L5</accession>
<accession>Q9FY98</accession>
<sequence length="259" mass="28306">MATLSMTLSNPKSLSAPPRRLSPINTSAFTSTSFRLRTKSSFDSISFSSSTPFSASSLLLHTSYTKRNHRCFSVQSNAEVVTEPQSKITHKVYFDISVGNPVGKLAGRIVIGLYGDDVPQTVENFRALCTGEKGFGYKGSTFHRVIRDFMIQGGDFEKGNGTGGKSVYGRTFKDENFKLSHVGPGVLSMANAGPNTNGSQFFICTIKTSWLDGRHVVFGQVIEGMEVVKLIEEQETDRGDRPRKKVVIADCGQLPMSEA</sequence>
<proteinExistence type="evidence at protein level"/>
<reference key="1">
    <citation type="journal article" date="2004" name="Plant Physiol.">
        <title>The Arabidopsis cyclophilin gene family.</title>
        <authorList>
            <person name="Romano P.G.N."/>
            <person name="Horton P."/>
            <person name="Gray J.E."/>
        </authorList>
    </citation>
    <scope>NUCLEOTIDE SEQUENCE [MRNA]</scope>
    <scope>TISSUE SPECIFICITY</scope>
    <scope>GENE FAMILY</scope>
    <scope>NOMENCLATURE</scope>
</reference>
<reference key="2">
    <citation type="journal article" date="2000" name="Nature">
        <title>Sequence and analysis of chromosome 5 of the plant Arabidopsis thaliana.</title>
        <authorList>
            <person name="Tabata S."/>
            <person name="Kaneko T."/>
            <person name="Nakamura Y."/>
            <person name="Kotani H."/>
            <person name="Kato T."/>
            <person name="Asamizu E."/>
            <person name="Miyajima N."/>
            <person name="Sasamoto S."/>
            <person name="Kimura T."/>
            <person name="Hosouchi T."/>
            <person name="Kawashima K."/>
            <person name="Kohara M."/>
            <person name="Matsumoto M."/>
            <person name="Matsuno A."/>
            <person name="Muraki A."/>
            <person name="Nakayama S."/>
            <person name="Nakazaki N."/>
            <person name="Naruo K."/>
            <person name="Okumura S."/>
            <person name="Shinpo S."/>
            <person name="Takeuchi C."/>
            <person name="Wada T."/>
            <person name="Watanabe A."/>
            <person name="Yamada M."/>
            <person name="Yasuda M."/>
            <person name="Sato S."/>
            <person name="de la Bastide M."/>
            <person name="Huang E."/>
            <person name="Spiegel L."/>
            <person name="Gnoj L."/>
            <person name="O'Shaughnessy A."/>
            <person name="Preston R."/>
            <person name="Habermann K."/>
            <person name="Murray J."/>
            <person name="Johnson D."/>
            <person name="Rohlfing T."/>
            <person name="Nelson J."/>
            <person name="Stoneking T."/>
            <person name="Pepin K."/>
            <person name="Spieth J."/>
            <person name="Sekhon M."/>
            <person name="Armstrong J."/>
            <person name="Becker M."/>
            <person name="Belter E."/>
            <person name="Cordum H."/>
            <person name="Cordes M."/>
            <person name="Courtney L."/>
            <person name="Courtney W."/>
            <person name="Dante M."/>
            <person name="Du H."/>
            <person name="Edwards J."/>
            <person name="Fryman J."/>
            <person name="Haakensen B."/>
            <person name="Lamar E."/>
            <person name="Latreille P."/>
            <person name="Leonard S."/>
            <person name="Meyer R."/>
            <person name="Mulvaney E."/>
            <person name="Ozersky P."/>
            <person name="Riley A."/>
            <person name="Strowmatt C."/>
            <person name="Wagner-McPherson C."/>
            <person name="Wollam A."/>
            <person name="Yoakum M."/>
            <person name="Bell M."/>
            <person name="Dedhia N."/>
            <person name="Parnell L."/>
            <person name="Shah R."/>
            <person name="Rodriguez M."/>
            <person name="Hoon See L."/>
            <person name="Vil D."/>
            <person name="Baker J."/>
            <person name="Kirchoff K."/>
            <person name="Toth K."/>
            <person name="King L."/>
            <person name="Bahret A."/>
            <person name="Miller B."/>
            <person name="Marra M.A."/>
            <person name="Martienssen R."/>
            <person name="McCombie W.R."/>
            <person name="Wilson R.K."/>
            <person name="Murphy G."/>
            <person name="Bancroft I."/>
            <person name="Volckaert G."/>
            <person name="Wambutt R."/>
            <person name="Duesterhoeft A."/>
            <person name="Stiekema W."/>
            <person name="Pohl T."/>
            <person name="Entian K.-D."/>
            <person name="Terryn N."/>
            <person name="Hartley N."/>
            <person name="Bent E."/>
            <person name="Johnson S."/>
            <person name="Langham S.-A."/>
            <person name="McCullagh B."/>
            <person name="Robben J."/>
            <person name="Grymonprez B."/>
            <person name="Zimmermann W."/>
            <person name="Ramsperger U."/>
            <person name="Wedler H."/>
            <person name="Balke K."/>
            <person name="Wedler E."/>
            <person name="Peters S."/>
            <person name="van Staveren M."/>
            <person name="Dirkse W."/>
            <person name="Mooijman P."/>
            <person name="Klein Lankhorst R."/>
            <person name="Weitzenegger T."/>
            <person name="Bothe G."/>
            <person name="Rose M."/>
            <person name="Hauf J."/>
            <person name="Berneiser S."/>
            <person name="Hempel S."/>
            <person name="Feldpausch M."/>
            <person name="Lamberth S."/>
            <person name="Villarroel R."/>
            <person name="Gielen J."/>
            <person name="Ardiles W."/>
            <person name="Bents O."/>
            <person name="Lemcke K."/>
            <person name="Kolesov G."/>
            <person name="Mayer K.F.X."/>
            <person name="Rudd S."/>
            <person name="Schoof H."/>
            <person name="Schueller C."/>
            <person name="Zaccaria P."/>
            <person name="Mewes H.-W."/>
            <person name="Bevan M."/>
            <person name="Fransz P.F."/>
        </authorList>
    </citation>
    <scope>NUCLEOTIDE SEQUENCE [LARGE SCALE GENOMIC DNA]</scope>
    <source>
        <strain>cv. Columbia</strain>
    </source>
</reference>
<reference key="3">
    <citation type="journal article" date="2017" name="Plant J.">
        <title>Araport11: a complete reannotation of the Arabidopsis thaliana reference genome.</title>
        <authorList>
            <person name="Cheng C.Y."/>
            <person name="Krishnakumar V."/>
            <person name="Chan A.P."/>
            <person name="Thibaud-Nissen F."/>
            <person name="Schobel S."/>
            <person name="Town C.D."/>
        </authorList>
    </citation>
    <scope>GENOME REANNOTATION</scope>
    <source>
        <strain>cv. Columbia</strain>
    </source>
</reference>
<reference key="4">
    <citation type="journal article" date="2003" name="Science">
        <title>Empirical analysis of transcriptional activity in the Arabidopsis genome.</title>
        <authorList>
            <person name="Yamada K."/>
            <person name="Lim J."/>
            <person name="Dale J.M."/>
            <person name="Chen H."/>
            <person name="Shinn P."/>
            <person name="Palm C.J."/>
            <person name="Southwick A.M."/>
            <person name="Wu H.C."/>
            <person name="Kim C.J."/>
            <person name="Nguyen M."/>
            <person name="Pham P.K."/>
            <person name="Cheuk R.F."/>
            <person name="Karlin-Newmann G."/>
            <person name="Liu S.X."/>
            <person name="Lam B."/>
            <person name="Sakano H."/>
            <person name="Wu T."/>
            <person name="Yu G."/>
            <person name="Miranda M."/>
            <person name="Quach H.L."/>
            <person name="Tripp M."/>
            <person name="Chang C.H."/>
            <person name="Lee J.M."/>
            <person name="Toriumi M.J."/>
            <person name="Chan M.M."/>
            <person name="Tang C.C."/>
            <person name="Onodera C.S."/>
            <person name="Deng J.M."/>
            <person name="Akiyama K."/>
            <person name="Ansari Y."/>
            <person name="Arakawa T."/>
            <person name="Banh J."/>
            <person name="Banno F."/>
            <person name="Bowser L."/>
            <person name="Brooks S.Y."/>
            <person name="Carninci P."/>
            <person name="Chao Q."/>
            <person name="Choy N."/>
            <person name="Enju A."/>
            <person name="Goldsmith A.D."/>
            <person name="Gurjal M."/>
            <person name="Hansen N.F."/>
            <person name="Hayashizaki Y."/>
            <person name="Johnson-Hopson C."/>
            <person name="Hsuan V.W."/>
            <person name="Iida K."/>
            <person name="Karnes M."/>
            <person name="Khan S."/>
            <person name="Koesema E."/>
            <person name="Ishida J."/>
            <person name="Jiang P.X."/>
            <person name="Jones T."/>
            <person name="Kawai J."/>
            <person name="Kamiya A."/>
            <person name="Meyers C."/>
            <person name="Nakajima M."/>
            <person name="Narusaka M."/>
            <person name="Seki M."/>
            <person name="Sakurai T."/>
            <person name="Satou M."/>
            <person name="Tamse R."/>
            <person name="Vaysberg M."/>
            <person name="Wallender E.K."/>
            <person name="Wong C."/>
            <person name="Yamamura Y."/>
            <person name="Yuan S."/>
            <person name="Shinozaki K."/>
            <person name="Davis R.W."/>
            <person name="Theologis A."/>
            <person name="Ecker J.R."/>
        </authorList>
    </citation>
    <scope>NUCLEOTIDE SEQUENCE [LARGE SCALE MRNA]</scope>
    <source>
        <strain>cv. Columbia</strain>
    </source>
</reference>
<reference key="5">
    <citation type="submission" date="2002-03" db="EMBL/GenBank/DDBJ databases">
        <title>Full-length cDNA from Arabidopsis thaliana.</title>
        <authorList>
            <person name="Brover V.V."/>
            <person name="Troukhan M.E."/>
            <person name="Alexandrov N.A."/>
            <person name="Lu Y.-P."/>
            <person name="Flavell R.B."/>
            <person name="Feldmann K.A."/>
        </authorList>
    </citation>
    <scope>NUCLEOTIDE SEQUENCE [LARGE SCALE MRNA]</scope>
</reference>
<reference key="6">
    <citation type="journal article" date="2002" name="J. Biol. Chem.">
        <title>Proteome map of the chloroplast lumen of Arabidopsis thaliana.</title>
        <authorList>
            <person name="Schubert M."/>
            <person name="Petersson U.A."/>
            <person name="Haas B.J."/>
            <person name="Funk C."/>
            <person name="Schroeder W.P."/>
            <person name="Kieselbach T."/>
        </authorList>
    </citation>
    <scope>PROTEIN SEQUENCE OF 77-88</scope>
    <scope>SUBCELLULAR LOCATION</scope>
</reference>
<reference key="7">
    <citation type="journal article" date="2002" name="Plant Cell">
        <title>Central functions of the lumenal and peripheral thylakoid proteome of Arabidopsis determined by experimentation and genome-wide prediction.</title>
        <authorList>
            <person name="Peltier J.-B."/>
            <person name="Emanuelsson O."/>
            <person name="Kalume D.E."/>
            <person name="Ytterberg J."/>
            <person name="Friso G."/>
            <person name="Rudella A."/>
            <person name="Liberles D.A."/>
            <person name="Soederberg L."/>
            <person name="Roepstorff P."/>
            <person name="von Heijne G."/>
            <person name="van Wijk K.J."/>
        </authorList>
    </citation>
    <scope>SUBCELLULAR LOCATION</scope>
    <scope>IDENTIFICATION BY MASS SPECTROMETRY</scope>
</reference>
<reference key="8">
    <citation type="journal article" date="2004" name="Plant Physiol.">
        <title>Immunophilins and parvulins. Superfamily of peptidyl prolyl isomerases in Arabidopsis.</title>
        <authorList>
            <person name="He Z."/>
            <person name="Li L."/>
            <person name="Luan S."/>
        </authorList>
    </citation>
    <scope>GENE FAMILY</scope>
    <scope>NOMENCLATURE</scope>
    <scope>INDUCTION</scope>
</reference>
<reference key="9">
    <citation type="journal article" date="2004" name="Plant Physiol.">
        <title>Arabidopsis AtCYP20-2 is a light-regulated cyclophilin-type peptidyl-prolyl cis-trans isomerase associated with the photosynthetic membranes.</title>
        <authorList>
            <person name="Romano P.G.N."/>
            <person name="Edvardsson A."/>
            <person name="Ruban A.V."/>
            <person name="Andersson B."/>
            <person name="Vener A.V."/>
            <person name="Gray J.E."/>
            <person name="Horton P."/>
        </authorList>
    </citation>
    <scope>SUBCELLULAR LOCATION</scope>
</reference>
<reference key="10">
    <citation type="journal article" date="2006" name="FEBS Lett.">
        <title>Profound redox sensitivity of peptidyl-prolyl isomerase activity in Arabidopsis thylakoid lumen.</title>
        <authorList>
            <person name="Shapiguzov A."/>
            <person name="Edvardsson A."/>
            <person name="Vener A.V."/>
        </authorList>
    </citation>
    <scope>FUNCTION</scope>
    <scope>CATALYTIC ACTIVITY</scope>
    <scope>IDENTIFICATION BY MASS SPECTROMETRY</scope>
</reference>
<reference key="11">
    <citation type="journal article" date="2008" name="J. Proteome Res.">
        <title>Toward an interaction map of the two-component signaling pathway of Arabidopsis thaliana.</title>
        <authorList>
            <person name="Dortay H."/>
            <person name="Gruhn N."/>
            <person name="Pfeifer A."/>
            <person name="Schwerdtner M."/>
            <person name="Schmuelling T."/>
            <person name="Heyl A."/>
        </authorList>
    </citation>
    <scope>INTERACTION WITH AHK2</scope>
</reference>
<reference key="12">
    <citation type="journal article" date="2009" name="Mol. Plant">
        <title>Towards characterization of the chloroplast NAD(P)H dehydrogenase complex.</title>
        <authorList>
            <person name="Suorsa M."/>
            <person name="Sirpioe S."/>
            <person name="Aro E.M."/>
        </authorList>
    </citation>
    <scope>REVIEW</scope>
</reference>
<reference key="13">
    <citation type="journal article" date="2011" name="Biochim. Biophys. Acta">
        <title>Structure and biogenesis of the chloroplast NAD(P)H dehydrogenase complex.</title>
        <authorList>
            <person name="Peng L."/>
            <person name="Yamamoto H."/>
            <person name="Shikanai T."/>
        </authorList>
    </citation>
    <scope>REVIEW</scope>
</reference>
<reference key="14">
    <citation type="journal article" date="2011" name="Plant Cell Physiol.">
        <title>Structure of the chloroplast NADH dehydrogenase-like complex: nomenclature for nuclear-encoded subunits.</title>
        <authorList>
            <person name="Ifuku K."/>
            <person name="Endo T."/>
            <person name="Shikanai T."/>
            <person name="Aro E.M."/>
        </authorList>
    </citation>
    <scope>NOMENCLATURE</scope>
    <scope>COMPONENT OF THE NDH COMPLEX</scope>
</reference>
<reference key="15">
    <citation type="journal article" date="2013" name="Plant Cell">
        <title>The cyclophilin CYP20-2 modulates the conformation of BRASSINAZOLE-RESISTANT1, which binds the promoter of FLOWERING LOCUS D to regulate flowering in Arabidopsis.</title>
        <authorList>
            <person name="Zhang Y."/>
            <person name="Li B."/>
            <person name="Xu Y."/>
            <person name="Li H."/>
            <person name="Li S."/>
            <person name="Zhang D."/>
            <person name="Mao Z."/>
            <person name="Guo S."/>
            <person name="Yang C."/>
            <person name="Weng Y."/>
            <person name="Chong K."/>
        </authorList>
    </citation>
    <scope>FUNCTION</scope>
    <scope>CATALYTIC ACTIVITY</scope>
    <scope>INTERACTION WITH BZR1</scope>
</reference>